<comment type="function">
    <text evidence="1">ATP-dependent specificity component of the Clp protease. It directs the protease to specific substrates. Can perform chaperone functions in the absence of ClpP.</text>
</comment>
<comment type="subunit">
    <text evidence="1">Component of the ClpX-ClpP complex. Forms a hexameric ring that, in the presence of ATP, binds to fourteen ClpP subunits assembled into a disk-like structure with a central cavity, resembling the structure of eukaryotic proteasomes.</text>
</comment>
<comment type="similarity">
    <text evidence="1">Belongs to the ClpX chaperone family.</text>
</comment>
<accession>Q72SG5</accession>
<dbReference type="EMBL" id="AE016823">
    <property type="protein sequence ID" value="AAS70017.1"/>
    <property type="molecule type" value="Genomic_DNA"/>
</dbReference>
<dbReference type="RefSeq" id="WP_001085747.1">
    <property type="nucleotide sequence ID" value="NC_005823.1"/>
</dbReference>
<dbReference type="SMR" id="Q72SG5"/>
<dbReference type="GeneID" id="61144721"/>
<dbReference type="KEGG" id="lic:LIC_11418"/>
<dbReference type="HOGENOM" id="CLU_014218_8_2_12"/>
<dbReference type="BRENDA" id="3.6.4.10">
    <property type="organism ID" value="2986"/>
</dbReference>
<dbReference type="Proteomes" id="UP000007037">
    <property type="component" value="Chromosome I"/>
</dbReference>
<dbReference type="GO" id="GO:0009376">
    <property type="term" value="C:HslUV protease complex"/>
    <property type="evidence" value="ECO:0007669"/>
    <property type="project" value="TreeGrafter"/>
</dbReference>
<dbReference type="GO" id="GO:0005524">
    <property type="term" value="F:ATP binding"/>
    <property type="evidence" value="ECO:0007669"/>
    <property type="project" value="UniProtKB-UniRule"/>
</dbReference>
<dbReference type="GO" id="GO:0016887">
    <property type="term" value="F:ATP hydrolysis activity"/>
    <property type="evidence" value="ECO:0007669"/>
    <property type="project" value="InterPro"/>
</dbReference>
<dbReference type="GO" id="GO:0140662">
    <property type="term" value="F:ATP-dependent protein folding chaperone"/>
    <property type="evidence" value="ECO:0007669"/>
    <property type="project" value="InterPro"/>
</dbReference>
<dbReference type="GO" id="GO:0046983">
    <property type="term" value="F:protein dimerization activity"/>
    <property type="evidence" value="ECO:0007669"/>
    <property type="project" value="InterPro"/>
</dbReference>
<dbReference type="GO" id="GO:0051082">
    <property type="term" value="F:unfolded protein binding"/>
    <property type="evidence" value="ECO:0007669"/>
    <property type="project" value="UniProtKB-UniRule"/>
</dbReference>
<dbReference type="GO" id="GO:0008270">
    <property type="term" value="F:zinc ion binding"/>
    <property type="evidence" value="ECO:0007669"/>
    <property type="project" value="InterPro"/>
</dbReference>
<dbReference type="GO" id="GO:0051301">
    <property type="term" value="P:cell division"/>
    <property type="evidence" value="ECO:0007669"/>
    <property type="project" value="TreeGrafter"/>
</dbReference>
<dbReference type="GO" id="GO:0051603">
    <property type="term" value="P:proteolysis involved in protein catabolic process"/>
    <property type="evidence" value="ECO:0007669"/>
    <property type="project" value="TreeGrafter"/>
</dbReference>
<dbReference type="CDD" id="cd19497">
    <property type="entry name" value="RecA-like_ClpX"/>
    <property type="match status" value="1"/>
</dbReference>
<dbReference type="FunFam" id="1.10.8.60:FF:000002">
    <property type="entry name" value="ATP-dependent Clp protease ATP-binding subunit ClpX"/>
    <property type="match status" value="1"/>
</dbReference>
<dbReference type="FunFam" id="3.40.50.300:FF:000005">
    <property type="entry name" value="ATP-dependent Clp protease ATP-binding subunit ClpX"/>
    <property type="match status" value="1"/>
</dbReference>
<dbReference type="Gene3D" id="1.10.8.60">
    <property type="match status" value="1"/>
</dbReference>
<dbReference type="Gene3D" id="6.20.220.10">
    <property type="entry name" value="ClpX chaperone, C4-type zinc finger domain"/>
    <property type="match status" value="1"/>
</dbReference>
<dbReference type="Gene3D" id="3.40.50.300">
    <property type="entry name" value="P-loop containing nucleotide triphosphate hydrolases"/>
    <property type="match status" value="1"/>
</dbReference>
<dbReference type="HAMAP" id="MF_00175">
    <property type="entry name" value="ClpX"/>
    <property type="match status" value="1"/>
</dbReference>
<dbReference type="InterPro" id="IPR003593">
    <property type="entry name" value="AAA+_ATPase"/>
</dbReference>
<dbReference type="InterPro" id="IPR050052">
    <property type="entry name" value="ATP-dep_Clp_protease_ClpX"/>
</dbReference>
<dbReference type="InterPro" id="IPR003959">
    <property type="entry name" value="ATPase_AAA_core"/>
</dbReference>
<dbReference type="InterPro" id="IPR019489">
    <property type="entry name" value="Clp_ATPase_C"/>
</dbReference>
<dbReference type="InterPro" id="IPR004487">
    <property type="entry name" value="Clp_protease_ATP-bd_su_ClpX"/>
</dbReference>
<dbReference type="InterPro" id="IPR046425">
    <property type="entry name" value="ClpX_bact"/>
</dbReference>
<dbReference type="InterPro" id="IPR027417">
    <property type="entry name" value="P-loop_NTPase"/>
</dbReference>
<dbReference type="InterPro" id="IPR010603">
    <property type="entry name" value="Znf_CppX_C4"/>
</dbReference>
<dbReference type="InterPro" id="IPR038366">
    <property type="entry name" value="Znf_CppX_C4_sf"/>
</dbReference>
<dbReference type="NCBIfam" id="TIGR00382">
    <property type="entry name" value="clpX"/>
    <property type="match status" value="1"/>
</dbReference>
<dbReference type="NCBIfam" id="NF003745">
    <property type="entry name" value="PRK05342.1"/>
    <property type="match status" value="1"/>
</dbReference>
<dbReference type="PANTHER" id="PTHR48102:SF7">
    <property type="entry name" value="ATP-DEPENDENT CLP PROTEASE ATP-BINDING SUBUNIT CLPX-LIKE, MITOCHONDRIAL"/>
    <property type="match status" value="1"/>
</dbReference>
<dbReference type="PANTHER" id="PTHR48102">
    <property type="entry name" value="ATP-DEPENDENT CLP PROTEASE ATP-BINDING SUBUNIT CLPX-LIKE, MITOCHONDRIAL-RELATED"/>
    <property type="match status" value="1"/>
</dbReference>
<dbReference type="Pfam" id="PF07724">
    <property type="entry name" value="AAA_2"/>
    <property type="match status" value="1"/>
</dbReference>
<dbReference type="Pfam" id="PF10431">
    <property type="entry name" value="ClpB_D2-small"/>
    <property type="match status" value="1"/>
</dbReference>
<dbReference type="Pfam" id="PF06689">
    <property type="entry name" value="zf-C4_ClpX"/>
    <property type="match status" value="1"/>
</dbReference>
<dbReference type="SMART" id="SM00382">
    <property type="entry name" value="AAA"/>
    <property type="match status" value="1"/>
</dbReference>
<dbReference type="SMART" id="SM01086">
    <property type="entry name" value="ClpB_D2-small"/>
    <property type="match status" value="1"/>
</dbReference>
<dbReference type="SMART" id="SM00994">
    <property type="entry name" value="zf-C4_ClpX"/>
    <property type="match status" value="1"/>
</dbReference>
<dbReference type="SUPFAM" id="SSF57716">
    <property type="entry name" value="Glucocorticoid receptor-like (DNA-binding domain)"/>
    <property type="match status" value="1"/>
</dbReference>
<dbReference type="SUPFAM" id="SSF52540">
    <property type="entry name" value="P-loop containing nucleoside triphosphate hydrolases"/>
    <property type="match status" value="1"/>
</dbReference>
<dbReference type="PROSITE" id="PS51902">
    <property type="entry name" value="CLPX_ZB"/>
    <property type="match status" value="1"/>
</dbReference>
<gene>
    <name evidence="1" type="primary">clpX</name>
    <name type="ordered locus">LIC_11418</name>
</gene>
<keyword id="KW-0067">ATP-binding</keyword>
<keyword id="KW-0143">Chaperone</keyword>
<keyword id="KW-0479">Metal-binding</keyword>
<keyword id="KW-0547">Nucleotide-binding</keyword>
<keyword id="KW-0862">Zinc</keyword>
<reference key="1">
    <citation type="journal article" date="2004" name="J. Bacteriol.">
        <title>Comparative genomics of two Leptospira interrogans serovars reveals novel insights into physiology and pathogenesis.</title>
        <authorList>
            <person name="Nascimento A.L.T.O."/>
            <person name="Ko A.I."/>
            <person name="Martins E.A.L."/>
            <person name="Monteiro-Vitorello C.B."/>
            <person name="Ho P.L."/>
            <person name="Haake D.A."/>
            <person name="Verjovski-Almeida S."/>
            <person name="Hartskeerl R.A."/>
            <person name="Marques M.V."/>
            <person name="Oliveira M.C."/>
            <person name="Menck C.F.M."/>
            <person name="Leite L.C.C."/>
            <person name="Carrer H."/>
            <person name="Coutinho L.L."/>
            <person name="Degrave W.M."/>
            <person name="Dellagostin O.A."/>
            <person name="El-Dorry H."/>
            <person name="Ferro E.S."/>
            <person name="Ferro M.I.T."/>
            <person name="Furlan L.R."/>
            <person name="Gamberini M."/>
            <person name="Giglioti E.A."/>
            <person name="Goes-Neto A."/>
            <person name="Goldman G.H."/>
            <person name="Goldman M.H.S."/>
            <person name="Harakava R."/>
            <person name="Jeronimo S.M.B."/>
            <person name="Junqueira-de-Azevedo I.L.M."/>
            <person name="Kimura E.T."/>
            <person name="Kuramae E.E."/>
            <person name="Lemos E.G.M."/>
            <person name="Lemos M.V.F."/>
            <person name="Marino C.L."/>
            <person name="Nunes L.R."/>
            <person name="de Oliveira R.C."/>
            <person name="Pereira G.G."/>
            <person name="Reis M.S."/>
            <person name="Schriefer A."/>
            <person name="Siqueira W.J."/>
            <person name="Sommer P."/>
            <person name="Tsai S.M."/>
            <person name="Simpson A.J.G."/>
            <person name="Ferro J.A."/>
            <person name="Camargo L.E.A."/>
            <person name="Kitajima J.P."/>
            <person name="Setubal J.C."/>
            <person name="Van Sluys M.A."/>
        </authorList>
    </citation>
    <scope>NUCLEOTIDE SEQUENCE [LARGE SCALE GENOMIC DNA]</scope>
    <source>
        <strain>Fiocruz L1-130</strain>
    </source>
</reference>
<protein>
    <recommendedName>
        <fullName evidence="1">ATP-dependent Clp protease ATP-binding subunit ClpX</fullName>
    </recommendedName>
</protein>
<name>CLPX_LEPIC</name>
<sequence>MAKKTPGNNGKQKLFCSFCGKEQDAVKRLVAGPGVYICDECISLCNEIIAEDHEHSHEKSEVFSEVPSPADIKSILDQYVIGQDHAKKALSVAVYNHYKRVNLKEKKSDVEIEKSNILLIGPTGSGKTLLAQTLARIIKVPFAIVDATALTEAGYVGEDVENIILKLIQNADNDIKKAEVGIIYIDEVDKIARKSDSASITRDVSGEGVQQALLKIIEGTVANVPPQGGRKHPHQEYLQVDTKNILFILGGAFVDLPNIIKSRTGIKTIGFGSEEQRIQSENKDVLMEQVIPEDLIKFGLIPEFIGRLPIVATLQELNVDMLRQIFREPKNSVLKQYTRLLELENVKLTFHDEAIDKIAELAIKRESGARGLRAIVENIMLDLMFDIPSRKDIEEVIITAEVIANRVAPTLILKKESKIA</sequence>
<organism>
    <name type="scientific">Leptospira interrogans serogroup Icterohaemorrhagiae serovar copenhageni (strain Fiocruz L1-130)</name>
    <dbReference type="NCBI Taxonomy" id="267671"/>
    <lineage>
        <taxon>Bacteria</taxon>
        <taxon>Pseudomonadati</taxon>
        <taxon>Spirochaetota</taxon>
        <taxon>Spirochaetia</taxon>
        <taxon>Leptospirales</taxon>
        <taxon>Leptospiraceae</taxon>
        <taxon>Leptospira</taxon>
    </lineage>
</organism>
<feature type="chain" id="PRO_0000160376" description="ATP-dependent Clp protease ATP-binding subunit ClpX">
    <location>
        <begin position="1"/>
        <end position="420"/>
    </location>
</feature>
<feature type="domain" description="ClpX-type ZB" evidence="2">
    <location>
        <begin position="4"/>
        <end position="57"/>
    </location>
</feature>
<feature type="binding site" evidence="2">
    <location>
        <position position="16"/>
    </location>
    <ligand>
        <name>Zn(2+)</name>
        <dbReference type="ChEBI" id="CHEBI:29105"/>
    </ligand>
</feature>
<feature type="binding site" evidence="2">
    <location>
        <position position="19"/>
    </location>
    <ligand>
        <name>Zn(2+)</name>
        <dbReference type="ChEBI" id="CHEBI:29105"/>
    </ligand>
</feature>
<feature type="binding site" evidence="2">
    <location>
        <position position="38"/>
    </location>
    <ligand>
        <name>Zn(2+)</name>
        <dbReference type="ChEBI" id="CHEBI:29105"/>
    </ligand>
</feature>
<feature type="binding site" evidence="2">
    <location>
        <position position="41"/>
    </location>
    <ligand>
        <name>Zn(2+)</name>
        <dbReference type="ChEBI" id="CHEBI:29105"/>
    </ligand>
</feature>
<feature type="binding site" evidence="1">
    <location>
        <begin position="122"/>
        <end position="129"/>
    </location>
    <ligand>
        <name>ATP</name>
        <dbReference type="ChEBI" id="CHEBI:30616"/>
    </ligand>
</feature>
<proteinExistence type="inferred from homology"/>
<evidence type="ECO:0000255" key="1">
    <source>
        <dbReference type="HAMAP-Rule" id="MF_00175"/>
    </source>
</evidence>
<evidence type="ECO:0000255" key="2">
    <source>
        <dbReference type="PROSITE-ProRule" id="PRU01250"/>
    </source>
</evidence>